<protein>
    <recommendedName>
        <fullName>RNA-binding protein 10</fullName>
    </recommendedName>
    <alternativeName>
        <fullName>RNA-binding motif protein 10</fullName>
    </alternativeName>
    <alternativeName>
        <fullName evidence="9">RNA-binding protein S1-1</fullName>
    </alternativeName>
</protein>
<proteinExistence type="evidence at protein level"/>
<comment type="function">
    <text evidence="2 8">Binds to ssRNA containing the consensus sequence 5'-AGGUAA-3' (By similarity). May be involved in post-transcriptional processing, most probably in mRNA splicing (By similarity). Binds to RNA homopolymers, with a preference for poly(G) and poly(U) and little for poly(A) (PubMed:8760884). May bind to specific miRNA hairpins (By similarity).</text>
</comment>
<comment type="subunit">
    <text evidence="1">Associates with the spliceosome. Component of a large chromatin remodeling complex, at least composed of MYSM1, PCAF, RBM10 and KIF11/TRIP5 (By similarity).</text>
</comment>
<comment type="subcellular location">
    <subcellularLocation>
        <location>Nucleus</location>
    </subcellularLocation>
</comment>
<gene>
    <name evidence="10" type="primary">Rbm10</name>
</gene>
<sequence>MEYERRGGRGDRTGRYGATDRSQDDGGENRSRDHDYRDMDYRSYPREYGSQEGKHEYDDSSEEQSAEIRGQLQSHGVQAREVRLMRNKSSGQSRGFAFVEFSHLQDATRWMEANQHSLNILGQKVSMHYSDPKPKINEDWLCNKCGVQNFKRREKCFKCGVPKSEAEQKLPLGTRLDQQALPLGGRELSQGLLPLPQPYQAQGVLTSQALSQGSEPSSENANDTIILRNLNPHSTMDSILGALAPYAVLSSSNVRVIKDKQTQLNRGFAFIQLSTIVEAAQLLQILQALHPPLTIDGKTINVEFAKGSKRDMASNEGSRINAASVASTAIAAAQWAISQASQGGESTWAAPEEPPVDYSYYQQDEGYGSSQGTDSLYAHGYLKNTKGPGMTGTKGDTSGAGPETSLEGGTDSVSLQAFSRAQPGAAPGLYQQSAEGSSGQGTATNSQSYTIMSPAVLKSELQSPTHPSSALPPATSPTAPESYSQYPVPDVSTYQYDETSGYYYDPQTGLYYDPNSQYYYNAQSQQYLYWDGERRTYIPALEQSADGHKDTGASSKEGKEKKEKHKTKTAQQIAKDMERWARSLNKQKENFKNSFQPISALRDDERRESATADAGYAILEKKGALAERQHTSMDLPKLASDDRPSPPRGLVAAYSGESDSEEEQERGGPEREEKLTDWQKLACLLCRRQFPSKEALIRHQQLSGLHKQNLEIHRRAHLSENELEALEKNDMEQMKYRDRAAERREKYGIPEPPEPKRRKYGGISTASVDFEQPTRDGLGSDNIGSRMLQAMGWKEGSGLGRKKQGIVTPIEAQTRVRGSGLGARGSSYGVTSTESYKETLHKTMVTRFNEAQ</sequence>
<evidence type="ECO:0000250" key="1"/>
<evidence type="ECO:0000250" key="2">
    <source>
        <dbReference type="UniProtKB" id="P98175"/>
    </source>
</evidence>
<evidence type="ECO:0000255" key="3">
    <source>
        <dbReference type="PROSITE-ProRule" id="PRU00042"/>
    </source>
</evidence>
<evidence type="ECO:0000255" key="4">
    <source>
        <dbReference type="PROSITE-ProRule" id="PRU00092"/>
    </source>
</evidence>
<evidence type="ECO:0000255" key="5">
    <source>
        <dbReference type="PROSITE-ProRule" id="PRU00176"/>
    </source>
</evidence>
<evidence type="ECO:0000255" key="6">
    <source>
        <dbReference type="PROSITE-ProRule" id="PRU00322"/>
    </source>
</evidence>
<evidence type="ECO:0000256" key="7">
    <source>
        <dbReference type="SAM" id="MobiDB-lite"/>
    </source>
</evidence>
<evidence type="ECO:0000269" key="8">
    <source>
    </source>
</evidence>
<evidence type="ECO:0000303" key="9">
    <source>
    </source>
</evidence>
<evidence type="ECO:0000312" key="10">
    <source>
        <dbReference type="RGD" id="631366"/>
    </source>
</evidence>
<evidence type="ECO:0007744" key="11">
    <source>
    </source>
</evidence>
<organism>
    <name type="scientific">Rattus norvegicus</name>
    <name type="common">Rat</name>
    <dbReference type="NCBI Taxonomy" id="10116"/>
    <lineage>
        <taxon>Eukaryota</taxon>
        <taxon>Metazoa</taxon>
        <taxon>Chordata</taxon>
        <taxon>Craniata</taxon>
        <taxon>Vertebrata</taxon>
        <taxon>Euteleostomi</taxon>
        <taxon>Mammalia</taxon>
        <taxon>Eutheria</taxon>
        <taxon>Euarchontoglires</taxon>
        <taxon>Glires</taxon>
        <taxon>Rodentia</taxon>
        <taxon>Myomorpha</taxon>
        <taxon>Muroidea</taxon>
        <taxon>Muridae</taxon>
        <taxon>Murinae</taxon>
        <taxon>Rattus</taxon>
    </lineage>
</organism>
<feature type="chain" id="PRO_0000081768" description="RNA-binding protein 10">
    <location>
        <begin position="1"/>
        <end position="852"/>
    </location>
</feature>
<feature type="domain" description="RRM 1" evidence="5">
    <location>
        <begin position="37"/>
        <end position="132"/>
    </location>
</feature>
<feature type="domain" description="RRM 2" evidence="5">
    <location>
        <begin position="223"/>
        <end position="307"/>
    </location>
</feature>
<feature type="domain" description="G-patch" evidence="4">
    <location>
        <begin position="780"/>
        <end position="826"/>
    </location>
</feature>
<feature type="zinc finger region" description="RanBP2-type" evidence="6">
    <location>
        <begin position="135"/>
        <end position="165"/>
    </location>
</feature>
<feature type="zinc finger region" description="C2H2-type; atypical" evidence="3">
    <location>
        <begin position="681"/>
        <end position="706"/>
    </location>
</feature>
<feature type="region of interest" description="Disordered" evidence="7">
    <location>
        <begin position="1"/>
        <end position="78"/>
    </location>
</feature>
<feature type="region of interest" description="Disordered" evidence="7">
    <location>
        <begin position="343"/>
        <end position="365"/>
    </location>
</feature>
<feature type="region of interest" description="Disordered" evidence="7">
    <location>
        <begin position="386"/>
        <end position="410"/>
    </location>
</feature>
<feature type="region of interest" description="Disordered" evidence="7">
    <location>
        <begin position="426"/>
        <end position="446"/>
    </location>
</feature>
<feature type="region of interest" description="Disordered" evidence="7">
    <location>
        <begin position="459"/>
        <end position="489"/>
    </location>
</feature>
<feature type="region of interest" description="Disordered" evidence="7">
    <location>
        <begin position="542"/>
        <end position="568"/>
    </location>
</feature>
<feature type="region of interest" description="Disordered" evidence="7">
    <location>
        <begin position="634"/>
        <end position="675"/>
    </location>
</feature>
<feature type="region of interest" description="Disordered" evidence="7">
    <location>
        <begin position="740"/>
        <end position="783"/>
    </location>
</feature>
<feature type="compositionally biased region" description="Basic and acidic residues" evidence="7">
    <location>
        <begin position="1"/>
        <end position="14"/>
    </location>
</feature>
<feature type="compositionally biased region" description="Basic and acidic residues" evidence="7">
    <location>
        <begin position="21"/>
        <end position="45"/>
    </location>
</feature>
<feature type="compositionally biased region" description="Polar residues" evidence="7">
    <location>
        <begin position="430"/>
        <end position="446"/>
    </location>
</feature>
<feature type="compositionally biased region" description="Low complexity" evidence="7">
    <location>
        <begin position="463"/>
        <end position="484"/>
    </location>
</feature>
<feature type="compositionally biased region" description="Basic and acidic residues" evidence="7">
    <location>
        <begin position="545"/>
        <end position="561"/>
    </location>
</feature>
<feature type="compositionally biased region" description="Basic and acidic residues" evidence="7">
    <location>
        <begin position="665"/>
        <end position="675"/>
    </location>
</feature>
<feature type="modified residue" description="Phosphoserine" evidence="2">
    <location>
        <position position="61"/>
    </location>
</feature>
<feature type="modified residue" description="N6-acetyllysine" evidence="2">
    <location>
        <position position="306"/>
    </location>
</feature>
<feature type="modified residue" description="Phosphoserine" evidence="2">
    <location>
        <position position="640"/>
    </location>
</feature>
<feature type="modified residue" description="Phosphoserine" evidence="11">
    <location>
        <position position="645"/>
    </location>
</feature>
<feature type="modified residue" description="Phosphoserine" evidence="11">
    <location>
        <position position="655"/>
    </location>
</feature>
<feature type="modified residue" description="Phosphoserine" evidence="11">
    <location>
        <position position="658"/>
    </location>
</feature>
<feature type="modified residue" description="Phosphoserine" evidence="11">
    <location>
        <position position="660"/>
    </location>
</feature>
<feature type="modified residue" description="Phosphoserine" evidence="2">
    <location>
        <position position="703"/>
    </location>
</feature>
<feature type="modified residue" description="Phosphoserine" evidence="11">
    <location>
        <position position="719"/>
    </location>
</feature>
<feature type="modified residue" description="Phosphoserine" evidence="2">
    <location>
        <position position="767"/>
    </location>
</feature>
<feature type="modified residue" description="Omega-N-methylarginine" evidence="2">
    <location>
        <position position="824"/>
    </location>
</feature>
<dbReference type="EMBL" id="D83948">
    <property type="protein sequence ID" value="BAA12144.1"/>
    <property type="molecule type" value="mRNA"/>
</dbReference>
<dbReference type="RefSeq" id="NP_690600.1">
    <property type="nucleotide sequence ID" value="NM_152861.5"/>
</dbReference>
<dbReference type="BMRB" id="P70501"/>
<dbReference type="BioGRID" id="249095">
    <property type="interactions" value="1"/>
</dbReference>
<dbReference type="FunCoup" id="P70501">
    <property type="interactions" value="4496"/>
</dbReference>
<dbReference type="STRING" id="10116.ENSRNOP00000072756"/>
<dbReference type="iPTMnet" id="P70501"/>
<dbReference type="PhosphoSitePlus" id="P70501"/>
<dbReference type="jPOST" id="P70501"/>
<dbReference type="PaxDb" id="10116-ENSRNOP00000011317"/>
<dbReference type="Ensembl" id="ENSRNOT00000011317.7">
    <property type="protein sequence ID" value="ENSRNOP00000011317.5"/>
    <property type="gene ID" value="ENSRNOG00000008472.8"/>
</dbReference>
<dbReference type="GeneID" id="64510"/>
<dbReference type="KEGG" id="rno:64510"/>
<dbReference type="UCSC" id="RGD:631366">
    <property type="organism name" value="rat"/>
</dbReference>
<dbReference type="AGR" id="RGD:631366"/>
<dbReference type="CTD" id="8241"/>
<dbReference type="RGD" id="631366">
    <property type="gene designation" value="Rbm10"/>
</dbReference>
<dbReference type="eggNOG" id="KOG0154">
    <property type="taxonomic scope" value="Eukaryota"/>
</dbReference>
<dbReference type="GeneTree" id="ENSGT00940000160369"/>
<dbReference type="HOGENOM" id="CLU_010527_0_0_1"/>
<dbReference type="InParanoid" id="P70501"/>
<dbReference type="PhylomeDB" id="P70501"/>
<dbReference type="Reactome" id="R-RNO-72163">
    <property type="pathway name" value="mRNA Splicing - Major Pathway"/>
</dbReference>
<dbReference type="Reactome" id="R-RNO-72203">
    <property type="pathway name" value="Processing of Capped Intron-Containing Pre-mRNA"/>
</dbReference>
<dbReference type="PRO" id="PR:P70501"/>
<dbReference type="Proteomes" id="UP000002494">
    <property type="component" value="Chromosome X"/>
</dbReference>
<dbReference type="Bgee" id="ENSRNOG00000008472">
    <property type="expression patterns" value="Expressed in thymus and 19 other cell types or tissues"/>
</dbReference>
<dbReference type="ExpressionAtlas" id="P70501">
    <property type="expression patterns" value="baseline and differential"/>
</dbReference>
<dbReference type="GO" id="GO:0005730">
    <property type="term" value="C:nucleolus"/>
    <property type="evidence" value="ECO:0000266"/>
    <property type="project" value="RGD"/>
</dbReference>
<dbReference type="GO" id="GO:0005634">
    <property type="term" value="C:nucleus"/>
    <property type="evidence" value="ECO:0000266"/>
    <property type="project" value="RGD"/>
</dbReference>
<dbReference type="GO" id="GO:0032991">
    <property type="term" value="C:protein-containing complex"/>
    <property type="evidence" value="ECO:0000266"/>
    <property type="project" value="RGD"/>
</dbReference>
<dbReference type="GO" id="GO:0042802">
    <property type="term" value="F:identical protein binding"/>
    <property type="evidence" value="ECO:0000266"/>
    <property type="project" value="RGD"/>
</dbReference>
<dbReference type="GO" id="GO:0035198">
    <property type="term" value="F:miRNA binding"/>
    <property type="evidence" value="ECO:0000250"/>
    <property type="project" value="UniProtKB"/>
</dbReference>
<dbReference type="GO" id="GO:0003723">
    <property type="term" value="F:RNA binding"/>
    <property type="evidence" value="ECO:0000318"/>
    <property type="project" value="GO_Central"/>
</dbReference>
<dbReference type="GO" id="GO:0003727">
    <property type="term" value="F:single-stranded RNA binding"/>
    <property type="evidence" value="ECO:0000314"/>
    <property type="project" value="RGD"/>
</dbReference>
<dbReference type="GO" id="GO:0008270">
    <property type="term" value="F:zinc ion binding"/>
    <property type="evidence" value="ECO:0007669"/>
    <property type="project" value="UniProtKB-KW"/>
</dbReference>
<dbReference type="GO" id="GO:0070935">
    <property type="term" value="P:3'-UTR-mediated mRNA stabilization"/>
    <property type="evidence" value="ECO:0000266"/>
    <property type="project" value="RGD"/>
</dbReference>
<dbReference type="GO" id="GO:0060379">
    <property type="term" value="P:cardiac muscle cell myoblast differentiation"/>
    <property type="evidence" value="ECO:0000270"/>
    <property type="project" value="RGD"/>
</dbReference>
<dbReference type="GO" id="GO:0000398">
    <property type="term" value="P:mRNA splicing, via spliceosome"/>
    <property type="evidence" value="ECO:0000318"/>
    <property type="project" value="GO_Central"/>
</dbReference>
<dbReference type="GO" id="GO:0048255">
    <property type="term" value="P:mRNA stabilization"/>
    <property type="evidence" value="ECO:0000315"/>
    <property type="project" value="RGD"/>
</dbReference>
<dbReference type="GO" id="GO:0061052">
    <property type="term" value="P:negative regulation of cell growth involved in cardiac muscle cell development"/>
    <property type="evidence" value="ECO:0000315"/>
    <property type="project" value="RGD"/>
</dbReference>
<dbReference type="GO" id="GO:0008285">
    <property type="term" value="P:negative regulation of cell population proliferation"/>
    <property type="evidence" value="ECO:0000266"/>
    <property type="project" value="RGD"/>
</dbReference>
<dbReference type="GO" id="GO:0048025">
    <property type="term" value="P:negative regulation of mRNA splicing, via spliceosome"/>
    <property type="evidence" value="ECO:0000266"/>
    <property type="project" value="RGD"/>
</dbReference>
<dbReference type="GO" id="GO:2000204">
    <property type="term" value="P:negative regulation of ribosomal large subunit export from nucleus"/>
    <property type="evidence" value="ECO:0000266"/>
    <property type="project" value="RGD"/>
</dbReference>
<dbReference type="GO" id="GO:0000122">
    <property type="term" value="P:negative regulation of transcription by RNA polymerase II"/>
    <property type="evidence" value="ECO:0000315"/>
    <property type="project" value="RGD"/>
</dbReference>
<dbReference type="GO" id="GO:1904706">
    <property type="term" value="P:negative regulation of vascular associated smooth muscle cell proliferation"/>
    <property type="evidence" value="ECO:0000266"/>
    <property type="project" value="RGD"/>
</dbReference>
<dbReference type="GO" id="GO:1900119">
    <property type="term" value="P:positive regulation of execution phase of apoptosis"/>
    <property type="evidence" value="ECO:0000315"/>
    <property type="project" value="RGD"/>
</dbReference>
<dbReference type="GO" id="GO:1905461">
    <property type="term" value="P:positive regulation of vascular associated smooth muscle cell apoptotic process"/>
    <property type="evidence" value="ECO:0000266"/>
    <property type="project" value="RGD"/>
</dbReference>
<dbReference type="GO" id="GO:1905459">
    <property type="term" value="P:regulation of vascular associated smooth muscle cell apoptotic process"/>
    <property type="evidence" value="ECO:0000266"/>
    <property type="project" value="RGD"/>
</dbReference>
<dbReference type="GO" id="GO:1905288">
    <property type="term" value="P:vascular associated smooth muscle cell apoptotic process"/>
    <property type="evidence" value="ECO:0000266"/>
    <property type="project" value="RGD"/>
</dbReference>
<dbReference type="GO" id="GO:1990874">
    <property type="term" value="P:vascular associated smooth muscle cell proliferation"/>
    <property type="evidence" value="ECO:0000266"/>
    <property type="project" value="RGD"/>
</dbReference>
<dbReference type="CDD" id="cd16167">
    <property type="entry name" value="OCRE_RBM10"/>
    <property type="match status" value="1"/>
</dbReference>
<dbReference type="CDD" id="cd12754">
    <property type="entry name" value="RRM2_RBM10"/>
    <property type="match status" value="1"/>
</dbReference>
<dbReference type="FunFam" id="3.30.70.330:FF:000110">
    <property type="entry name" value="RNA-binding protein 10 isoform X1"/>
    <property type="match status" value="1"/>
</dbReference>
<dbReference type="FunFam" id="3.30.70.330:FF:000114">
    <property type="entry name" value="RNA-binding protein 10 isoform X1"/>
    <property type="match status" value="1"/>
</dbReference>
<dbReference type="FunFam" id="4.10.1060.10:FF:000005">
    <property type="entry name" value="RNA-binding protein 10 isoform X2"/>
    <property type="match status" value="1"/>
</dbReference>
<dbReference type="Gene3D" id="3.30.70.330">
    <property type="match status" value="2"/>
</dbReference>
<dbReference type="Gene3D" id="4.10.1060.10">
    <property type="entry name" value="Zinc finger, RanBP2-type"/>
    <property type="match status" value="1"/>
</dbReference>
<dbReference type="InterPro" id="IPR000467">
    <property type="entry name" value="G_patch_dom"/>
</dbReference>
<dbReference type="InterPro" id="IPR012677">
    <property type="entry name" value="Nucleotide-bd_a/b_plait_sf"/>
</dbReference>
<dbReference type="InterPro" id="IPR041591">
    <property type="entry name" value="OCRE"/>
</dbReference>
<dbReference type="InterPro" id="IPR035979">
    <property type="entry name" value="RBD_domain_sf"/>
</dbReference>
<dbReference type="InterPro" id="IPR035618">
    <property type="entry name" value="RBM10_OCRE"/>
</dbReference>
<dbReference type="InterPro" id="IPR034992">
    <property type="entry name" value="RBM10_RRM2"/>
</dbReference>
<dbReference type="InterPro" id="IPR000504">
    <property type="entry name" value="RRM_dom"/>
</dbReference>
<dbReference type="InterPro" id="IPR013087">
    <property type="entry name" value="Znf_C2H2_type"/>
</dbReference>
<dbReference type="InterPro" id="IPR001876">
    <property type="entry name" value="Znf_RanBP2"/>
</dbReference>
<dbReference type="InterPro" id="IPR036443">
    <property type="entry name" value="Znf_RanBP2_sf"/>
</dbReference>
<dbReference type="PANTHER" id="PTHR13948">
    <property type="entry name" value="RNA-BINDING PROTEIN"/>
    <property type="match status" value="1"/>
</dbReference>
<dbReference type="PANTHER" id="PTHR13948:SF4">
    <property type="entry name" value="RNA-BINDING PROTEIN 10"/>
    <property type="match status" value="1"/>
</dbReference>
<dbReference type="Pfam" id="PF01585">
    <property type="entry name" value="G-patch"/>
    <property type="match status" value="1"/>
</dbReference>
<dbReference type="Pfam" id="PF17780">
    <property type="entry name" value="OCRE"/>
    <property type="match status" value="1"/>
</dbReference>
<dbReference type="Pfam" id="PF00076">
    <property type="entry name" value="RRM_1"/>
    <property type="match status" value="1"/>
</dbReference>
<dbReference type="Pfam" id="PF00641">
    <property type="entry name" value="Zn_ribbon_RanBP"/>
    <property type="match status" value="1"/>
</dbReference>
<dbReference type="SMART" id="SM00443">
    <property type="entry name" value="G_patch"/>
    <property type="match status" value="1"/>
</dbReference>
<dbReference type="SMART" id="SM00360">
    <property type="entry name" value="RRM"/>
    <property type="match status" value="2"/>
</dbReference>
<dbReference type="SMART" id="SM00547">
    <property type="entry name" value="ZnF_RBZ"/>
    <property type="match status" value="1"/>
</dbReference>
<dbReference type="SUPFAM" id="SSF90209">
    <property type="entry name" value="Ran binding protein zinc finger-like"/>
    <property type="match status" value="1"/>
</dbReference>
<dbReference type="SUPFAM" id="SSF54928">
    <property type="entry name" value="RNA-binding domain, RBD"/>
    <property type="match status" value="2"/>
</dbReference>
<dbReference type="PROSITE" id="PS50174">
    <property type="entry name" value="G_PATCH"/>
    <property type="match status" value="1"/>
</dbReference>
<dbReference type="PROSITE" id="PS50102">
    <property type="entry name" value="RRM"/>
    <property type="match status" value="2"/>
</dbReference>
<dbReference type="PROSITE" id="PS01358">
    <property type="entry name" value="ZF_RANBP2_1"/>
    <property type="match status" value="1"/>
</dbReference>
<dbReference type="PROSITE" id="PS50199">
    <property type="entry name" value="ZF_RANBP2_2"/>
    <property type="match status" value="1"/>
</dbReference>
<dbReference type="PROSITE" id="PS50157">
    <property type="entry name" value="ZINC_FINGER_C2H2_2"/>
    <property type="match status" value="1"/>
</dbReference>
<reference key="1">
    <citation type="journal article" date="1996" name="Nucleic Acids Res.">
        <title>Molecular cloning of a RNA binding protein, S1-1.</title>
        <authorList>
            <person name="Inoue A."/>
            <person name="Takahashi K."/>
            <person name="Kimura M."/>
            <person name="Watanabe T."/>
            <person name="Morisawa S."/>
        </authorList>
    </citation>
    <scope>NUCLEOTIDE SEQUENCE [MRNA]</scope>
    <scope>FUNCTION</scope>
    <source>
        <strain>Sprague-Dawley</strain>
        <tissue>Liver</tissue>
    </source>
</reference>
<reference key="2">
    <citation type="journal article" date="2012" name="Nat. Commun.">
        <title>Quantitative maps of protein phosphorylation sites across 14 different rat organs and tissues.</title>
        <authorList>
            <person name="Lundby A."/>
            <person name="Secher A."/>
            <person name="Lage K."/>
            <person name="Nordsborg N.B."/>
            <person name="Dmytriyev A."/>
            <person name="Lundby C."/>
            <person name="Olsen J.V."/>
        </authorList>
    </citation>
    <scope>PHOSPHORYLATION [LARGE SCALE ANALYSIS] AT SER-645; SER-655; SER-658; SER-660 AND SER-719</scope>
    <scope>IDENTIFICATION BY MASS SPECTROMETRY [LARGE SCALE ANALYSIS]</scope>
</reference>
<name>RBM10_RAT</name>
<accession>P70501</accession>
<keyword id="KW-0007">Acetylation</keyword>
<keyword id="KW-0479">Metal-binding</keyword>
<keyword id="KW-0488">Methylation</keyword>
<keyword id="KW-0539">Nucleus</keyword>
<keyword id="KW-0597">Phosphoprotein</keyword>
<keyword id="KW-1185">Reference proteome</keyword>
<keyword id="KW-0677">Repeat</keyword>
<keyword id="KW-0694">RNA-binding</keyword>
<keyword id="KW-0862">Zinc</keyword>
<keyword id="KW-0863">Zinc-finger</keyword>